<evidence type="ECO:0000250" key="1">
    <source>
        <dbReference type="UniProtKB" id="Q99575"/>
    </source>
</evidence>
<evidence type="ECO:0000255" key="2">
    <source>
        <dbReference type="PROSITE-ProRule" id="PRU00768"/>
    </source>
</evidence>
<evidence type="ECO:0000256" key="3">
    <source>
        <dbReference type="SAM" id="MobiDB-lite"/>
    </source>
</evidence>
<evidence type="ECO:0000269" key="4">
    <source>
    </source>
</evidence>
<evidence type="ECO:0000269" key="5">
    <source>
    </source>
</evidence>
<evidence type="ECO:0000303" key="6">
    <source>
    </source>
</evidence>
<evidence type="ECO:0000303" key="7">
    <source>
    </source>
</evidence>
<evidence type="ECO:0000305" key="8"/>
<evidence type="ECO:0000312" key="9">
    <source>
        <dbReference type="Araport" id="AT2G47300"/>
    </source>
</evidence>
<evidence type="ECO:0000312" key="10">
    <source>
        <dbReference type="EMBL" id="AAY82264.1"/>
    </source>
</evidence>
<evidence type="ECO:0000312" key="11">
    <source>
        <dbReference type="EMBL" id="AEC10825.1"/>
    </source>
</evidence>
<comment type="function">
    <text evidence="4 5">Component of ribonuclease P, a ribonucleoprotein complex that generates mature tRNA molecules by cleaving their 5'-ends (PubMed:22641852). Also a component of the MRP ribonuclease complex, which cleaves pre-rRNA sequences (PubMed:22549728). Required for rRNA maturation, including 5.8S rRNA processing (PubMed:22549728).</text>
</comment>
<comment type="subunit">
    <text evidence="1 5">Component of nuclear RNase P and RNase MRP ribonucleoproteins (PubMed:22641852). RNase P consists of a catalytic RNA moiety and different protein chains (By similarity). Several subunits of RNase P are also part of the RNase MRP complex (By similarity). RNase MRP consists of a catalytic RNA moiety and several protein subunits (By similarity).</text>
</comment>
<comment type="subcellular location">
    <subcellularLocation>
        <location evidence="2">Nucleus</location>
    </subcellularLocation>
    <subcellularLocation>
        <location evidence="1">Nucleus</location>
        <location evidence="1">Nucleolus</location>
    </subcellularLocation>
</comment>
<comment type="alternative products">
    <event type="alternative splicing"/>
    <isoform>
        <id>F4IL30-1</id>
        <name>1</name>
        <name evidence="7">Var 2a</name>
        <sequence type="displayed"/>
    </isoform>
    <isoform>
        <id>F4IL30-2</id>
        <name evidence="10 11">2</name>
        <name evidence="7">Var 2b</name>
        <sequence type="described" ref="VSP_061002"/>
    </isoform>
    <isoform>
        <id>F4IL30-3</id>
        <name>3</name>
        <name evidence="7">Var 3</name>
        <sequence type="described" ref="VSP_061005 VSP_061006"/>
    </isoform>
    <isoform>
        <id>F4IL30-4</id>
        <name>4</name>
        <name evidence="7">Var 1</name>
        <sequence type="described" ref="VSP_061003 VSP_061004"/>
    </isoform>
</comment>
<comment type="disruption phenotype">
    <text evidence="4">Accumulation of unprocessed cytosolic rRNA precursors, especially the large 35S rRNA precursor, as well as of the internal transcribed spacer 1 (ITS1) fragment corresponding to the region between the 18S and 5.8S rRNAs that contains the A3 cleavage sites.</text>
</comment>
<comment type="sequence caution" evidence="8">
    <conflict type="erroneous gene model prediction">
        <sequence resource="EMBL-CDS" id="AAB63830"/>
    </conflict>
</comment>
<dbReference type="EMBL" id="FN673552">
    <property type="protein sequence ID" value="CBK00919.1"/>
    <property type="molecule type" value="mRNA"/>
</dbReference>
<dbReference type="EMBL" id="AC002337">
    <property type="protein sequence ID" value="AAB63829.1"/>
    <property type="molecule type" value="Genomic_DNA"/>
</dbReference>
<dbReference type="EMBL" id="AC002337">
    <property type="protein sequence ID" value="AAB63830.1"/>
    <property type="status" value="ALT_SEQ"/>
    <property type="molecule type" value="Genomic_DNA"/>
</dbReference>
<dbReference type="EMBL" id="CP002685">
    <property type="protein sequence ID" value="AEC10824.1"/>
    <property type="molecule type" value="Genomic_DNA"/>
</dbReference>
<dbReference type="EMBL" id="CP002685">
    <property type="protein sequence ID" value="AEC10825.1"/>
    <property type="molecule type" value="Genomic_DNA"/>
</dbReference>
<dbReference type="EMBL" id="DQ069804">
    <property type="protein sequence ID" value="AAY82263.1"/>
    <property type="molecule type" value="mRNA"/>
</dbReference>
<dbReference type="EMBL" id="DQ069805">
    <property type="protein sequence ID" value="AAY82264.1"/>
    <property type="molecule type" value="mRNA"/>
</dbReference>
<dbReference type="PIR" id="D84913">
    <property type="entry name" value="D84913"/>
</dbReference>
<dbReference type="PIR" id="E84913">
    <property type="entry name" value="E84913"/>
</dbReference>
<dbReference type="RefSeq" id="NP_001078072.1">
    <molecule id="F4IL30-1"/>
    <property type="nucleotide sequence ID" value="NM_001084603.2"/>
</dbReference>
<dbReference type="RefSeq" id="NP_001078073.1">
    <molecule id="F4IL30-2"/>
    <property type="nucleotide sequence ID" value="NM_001084604.1"/>
</dbReference>
<dbReference type="SMR" id="F4IL30"/>
<dbReference type="FunCoup" id="F4IL30">
    <property type="interactions" value="3547"/>
</dbReference>
<dbReference type="STRING" id="3702.F4IL30"/>
<dbReference type="iPTMnet" id="F4IL30"/>
<dbReference type="PaxDb" id="3702-AT2G47300.2"/>
<dbReference type="ProteomicsDB" id="212360"/>
<dbReference type="ProteomicsDB" id="252229"/>
<dbReference type="EnsemblPlants" id="AT2G47300.2">
    <molecule id="F4IL30-1"/>
    <property type="protein sequence ID" value="AT2G47300.2"/>
    <property type="gene ID" value="AT2G47300"/>
</dbReference>
<dbReference type="EnsemblPlants" id="AT2G47300.3">
    <molecule id="F4IL30-2"/>
    <property type="protein sequence ID" value="AT2G47300.3"/>
    <property type="gene ID" value="AT2G47300"/>
</dbReference>
<dbReference type="GeneID" id="819343"/>
<dbReference type="Gramene" id="AT2G47300.2">
    <molecule id="F4IL30-1"/>
    <property type="protein sequence ID" value="AT2G47300.2"/>
    <property type="gene ID" value="AT2G47300"/>
</dbReference>
<dbReference type="Gramene" id="AT2G47300.3">
    <molecule id="F4IL30-2"/>
    <property type="protein sequence ID" value="AT2G47300.3"/>
    <property type="gene ID" value="AT2G47300"/>
</dbReference>
<dbReference type="KEGG" id="ath:AT2G47300"/>
<dbReference type="Araport" id="AT2G47300"/>
<dbReference type="TAIR" id="AT2G47300">
    <property type="gene designation" value="POP1"/>
</dbReference>
<dbReference type="eggNOG" id="KOG3322">
    <property type="taxonomic scope" value="Eukaryota"/>
</dbReference>
<dbReference type="HOGENOM" id="CLU_018268_0_0_1"/>
<dbReference type="InParanoid" id="F4IL30"/>
<dbReference type="OMA" id="VGFIACE"/>
<dbReference type="OrthoDB" id="442863at2759"/>
<dbReference type="BRENDA" id="3.1.26.5">
    <property type="organism ID" value="399"/>
</dbReference>
<dbReference type="PRO" id="PR:F4IL30"/>
<dbReference type="Proteomes" id="UP000006548">
    <property type="component" value="Chromosome 2"/>
</dbReference>
<dbReference type="ExpressionAtlas" id="F4IL30">
    <property type="expression patterns" value="baseline and differential"/>
</dbReference>
<dbReference type="GO" id="GO:0005655">
    <property type="term" value="C:nucleolar ribonuclease P complex"/>
    <property type="evidence" value="ECO:0007669"/>
    <property type="project" value="InterPro"/>
</dbReference>
<dbReference type="GO" id="GO:0000172">
    <property type="term" value="C:ribonuclease MRP complex"/>
    <property type="evidence" value="ECO:0007669"/>
    <property type="project" value="InterPro"/>
</dbReference>
<dbReference type="GO" id="GO:0004526">
    <property type="term" value="F:ribonuclease P activity"/>
    <property type="evidence" value="ECO:0007669"/>
    <property type="project" value="UniProtKB-EC"/>
</dbReference>
<dbReference type="GO" id="GO:0006364">
    <property type="term" value="P:rRNA processing"/>
    <property type="evidence" value="ECO:0000315"/>
    <property type="project" value="TAIR"/>
</dbReference>
<dbReference type="InterPro" id="IPR039182">
    <property type="entry name" value="Pop1"/>
</dbReference>
<dbReference type="InterPro" id="IPR055079">
    <property type="entry name" value="POP1_C"/>
</dbReference>
<dbReference type="InterPro" id="IPR009723">
    <property type="entry name" value="Pop1_N"/>
</dbReference>
<dbReference type="InterPro" id="IPR012590">
    <property type="entry name" value="POPLD_dom"/>
</dbReference>
<dbReference type="PANTHER" id="PTHR22731">
    <property type="entry name" value="RIBONUCLEASES P/MRP PROTEIN SUBUNIT POP1"/>
    <property type="match status" value="1"/>
</dbReference>
<dbReference type="PANTHER" id="PTHR22731:SF3">
    <property type="entry name" value="RIBONUCLEASES P_MRP PROTEIN SUBUNIT POP1"/>
    <property type="match status" value="1"/>
</dbReference>
<dbReference type="Pfam" id="PF22770">
    <property type="entry name" value="POP1_C"/>
    <property type="match status" value="1"/>
</dbReference>
<dbReference type="Pfam" id="PF06978">
    <property type="entry name" value="POP1_N"/>
    <property type="match status" value="1"/>
</dbReference>
<dbReference type="Pfam" id="PF08170">
    <property type="entry name" value="POPLD"/>
    <property type="match status" value="1"/>
</dbReference>
<keyword id="KW-0025">Alternative splicing</keyword>
<keyword id="KW-0539">Nucleus</keyword>
<keyword id="KW-1185">Reference proteome</keyword>
<keyword id="KW-0698">rRNA processing</keyword>
<keyword id="KW-0819">tRNA processing</keyword>
<feature type="chain" id="PRO_0000452458" description="Ribonucleases P/MRP protein subunit POP1">
    <location>
        <begin position="1"/>
        <end position="826"/>
    </location>
</feature>
<feature type="region of interest" description="Disordered" evidence="3">
    <location>
        <begin position="1"/>
        <end position="24"/>
    </location>
</feature>
<feature type="region of interest" description="Disordered" evidence="3">
    <location>
        <begin position="49"/>
        <end position="91"/>
    </location>
</feature>
<feature type="short sequence motif" description="Nuclear localization signal" evidence="2">
    <location>
        <begin position="58"/>
        <end position="65"/>
    </location>
</feature>
<feature type="compositionally biased region" description="Basic residues" evidence="3">
    <location>
        <begin position="70"/>
        <end position="79"/>
    </location>
</feature>
<feature type="splice variant" id="VSP_061002" description="In isoform 2.">
    <original>MATTANGNSKKRDGGLSSLAPRKINVQKFSEARAPELESLHSIVSERLNKDFRSKRNKRRRTNSYNNQPAKKRNIKRQKSQSLIGQVSGGDHEVKITRRVKRRMELKGNPETGFCTSGDGTKRLRTHVWHAKRFTMTKLWGFHLPLGLHGRGRGSRDVLKQSRQGVLVHDASYHIAVQLEGPE</original>
    <variation>MMQAITLLCNWRVQRQ</variation>
    <location>
        <begin position="1"/>
        <end position="183"/>
    </location>
</feature>
<feature type="splice variant" id="VSP_061003" description="In isoform 4.">
    <original>GSLLSIL</original>
    <variation>AGIHTYS</variation>
    <location>
        <begin position="184"/>
        <end position="190"/>
    </location>
</feature>
<feature type="splice variant" id="VSP_061004" description="In isoform 4.">
    <location>
        <begin position="191"/>
        <end position="826"/>
    </location>
</feature>
<feature type="splice variant" id="VSP_061005" description="In isoform 3.">
    <original>MNETGVSVDCF</original>
    <variation>VAICCLLRLFL</variation>
    <location>
        <begin position="297"/>
        <end position="307"/>
    </location>
</feature>
<feature type="splice variant" id="VSP_061006" description="In isoform 3.">
    <location>
        <begin position="308"/>
        <end position="826"/>
    </location>
</feature>
<feature type="sequence conflict" description="In Ref. 4; AAY82263/AAY82264." evidence="8" ref="4">
    <original>L</original>
    <variation>F</variation>
    <location>
        <position position="674"/>
    </location>
</feature>
<sequence>MATTANGNSKKRDGGLSSLAPRKINVQKFSEARAPELESLHSIVSERLNKDFRSKRNKRRRTNSYNNQPAKKRNIKRQKSQSLIGQVSGGDHEVKITRRVKRRMELKGNPETGFCTSGDGTKRLRTHVWHAKRFTMTKLWGFHLPLGLHGRGRGSRDVLKQSRQGVLVHDASYHIAVQLEGPEGSLLSILNMLLEPSPSSHSKEVFDSILTGGSYENAMLYHVEPPVSQAIAPVTYMWRPSKIPKRRNEEKGGDGIGTDLPVSDKDHEDFRKLWVWIHASSFSEGYAILKVACQKQMNETGVSVDCFSLEGQLAKLEIFGSKASHLLQKTLHPATSTSENPSILRKCSMEKAEVKNVADLYTEENVSSGAILAQFVIDPRLILTSPHDDRTVSVETIKTEPTESVETTTNTEAETFPEVFNCLWDANSELTPPEEENMLCWEKHQSRMDSLCLDDPAAEVPKVSSRPRSSRSCPLLLLKHKKLGNAPTGWSLILPLSWIKVFWNAFVSKGAHAIGQREKRWVSCDDGLPFFPSDFPDCKAYSSFTLSEAADLEEKAQRRPPAIRPFRIPIPPPWNSIHVTRSIGEGSNQKFSSNGRSVVEISSYGGNLFDGIVARTSDSLTTFLQTFTSDNMLLFPHNTSKPSTDLMMTLQEDDKKVRAQIHQSSNKLCLVRVLLHAFKEGSFEEGAVVCAPTLADISLLKSSCSEGEDGRVTIPQSSVSSYFQEQPCGTWELNVPEDTLTEQSHRWPIGFVTTGFVRGSKKPAAEAFCDAVLLGRLRDEQWRDKDVRRRKKQIYVLVRNLRSSAFRLALATIVLEQQDYCDVHCF</sequence>
<protein>
    <recommendedName>
        <fullName evidence="6 7">Ribonucleases P/MRP protein subunit POP1</fullName>
        <shortName evidence="7">Pop1p</shortName>
        <shortName evidence="6 7">RNase P/MRP POP1</shortName>
    </recommendedName>
    <alternativeName>
        <fullName evidence="6">RNA-processing protein POP1</fullName>
    </alternativeName>
</protein>
<accession>F4IL30</accession>
<accession>F4IL31</accession>
<accession>L0N807</accession>
<accession>O22903</accession>
<accession>O22904</accession>
<accession>Q4PL83</accession>
<accession>Q4PL84</accession>
<reference key="1">
    <citation type="journal article" date="2012" name="Nucleic Acids Res.">
        <title>RNase MRP RNA and RNase P activity in plants are associated with a Pop1p containing complex.</title>
        <authorList>
            <person name="Krehan M."/>
            <person name="Heubeck C."/>
            <person name="Menzel N."/>
            <person name="Seibel P."/>
            <person name="Schoen A."/>
        </authorList>
    </citation>
    <scope>NUCLEOTIDE SEQUENCE [MRNA] (ISOFORM 3)</scope>
    <scope>FUNCTION</scope>
    <scope>SUBUNIT</scope>
    <source>
        <strain>cv. Columbia</strain>
        <tissue>Leaf</tissue>
    </source>
</reference>
<reference key="2">
    <citation type="journal article" date="1999" name="Nature">
        <title>Sequence and analysis of chromosome 2 of the plant Arabidopsis thaliana.</title>
        <authorList>
            <person name="Lin X."/>
            <person name="Kaul S."/>
            <person name="Rounsley S.D."/>
            <person name="Shea T.P."/>
            <person name="Benito M.-I."/>
            <person name="Town C.D."/>
            <person name="Fujii C.Y."/>
            <person name="Mason T.M."/>
            <person name="Bowman C.L."/>
            <person name="Barnstead M.E."/>
            <person name="Feldblyum T.V."/>
            <person name="Buell C.R."/>
            <person name="Ketchum K.A."/>
            <person name="Lee J.J."/>
            <person name="Ronning C.M."/>
            <person name="Koo H.L."/>
            <person name="Moffat K.S."/>
            <person name="Cronin L.A."/>
            <person name="Shen M."/>
            <person name="Pai G."/>
            <person name="Van Aken S."/>
            <person name="Umayam L."/>
            <person name="Tallon L.J."/>
            <person name="Gill J.E."/>
            <person name="Adams M.D."/>
            <person name="Carrera A.J."/>
            <person name="Creasy T.H."/>
            <person name="Goodman H.M."/>
            <person name="Somerville C.R."/>
            <person name="Copenhaver G.P."/>
            <person name="Preuss D."/>
            <person name="Nierman W.C."/>
            <person name="White O."/>
            <person name="Eisen J.A."/>
            <person name="Salzberg S.L."/>
            <person name="Fraser C.M."/>
            <person name="Venter J.C."/>
        </authorList>
    </citation>
    <scope>NUCLEOTIDE SEQUENCE [LARGE SCALE GENOMIC DNA]</scope>
    <source>
        <strain>cv. Columbia</strain>
    </source>
</reference>
<reference key="3">
    <citation type="journal article" date="2017" name="Plant J.">
        <title>Araport11: a complete reannotation of the Arabidopsis thaliana reference genome.</title>
        <authorList>
            <person name="Cheng C.Y."/>
            <person name="Krishnakumar V."/>
            <person name="Chan A.P."/>
            <person name="Thibaud-Nissen F."/>
            <person name="Schobel S."/>
            <person name="Town C.D."/>
        </authorList>
    </citation>
    <scope>GENOME REANNOTATION</scope>
    <source>
        <strain>cv. Columbia</strain>
    </source>
</reference>
<reference key="4">
    <citation type="journal article" date="2005" name="Plant Physiol.">
        <title>Analysis of the cDNAs of hypothetical genes on Arabidopsis chromosome 2 reveals numerous transcript variants.</title>
        <authorList>
            <person name="Xiao Y.-L."/>
            <person name="Smith S.R."/>
            <person name="Ishmael N."/>
            <person name="Redman J.C."/>
            <person name="Kumar N."/>
            <person name="Monaghan E.L."/>
            <person name="Ayele M."/>
            <person name="Haas B.J."/>
            <person name="Wu H.C."/>
            <person name="Town C.D."/>
        </authorList>
    </citation>
    <scope>NUCLEOTIDE SEQUENCE [LARGE SCALE MRNA] (ISOFORMS 1 AND 2)</scope>
    <source>
        <strain>cv. Columbia</strain>
    </source>
</reference>
<reference key="5">
    <citation type="journal article" date="2012" name="Genes Dev.">
        <title>PRORP proteins support RNase P activity in both organelles and the nucleus in Arabidopsis.</title>
        <authorList>
            <person name="Gutmann B."/>
            <person name="Gobert A."/>
            <person name="Giege P."/>
        </authorList>
    </citation>
    <scope>FUNCTION</scope>
    <scope>DISRUPTION PHENOTYPE</scope>
</reference>
<name>POP1_ARATH</name>
<organism>
    <name type="scientific">Arabidopsis thaliana</name>
    <name type="common">Mouse-ear cress</name>
    <dbReference type="NCBI Taxonomy" id="3702"/>
    <lineage>
        <taxon>Eukaryota</taxon>
        <taxon>Viridiplantae</taxon>
        <taxon>Streptophyta</taxon>
        <taxon>Embryophyta</taxon>
        <taxon>Tracheophyta</taxon>
        <taxon>Spermatophyta</taxon>
        <taxon>Magnoliopsida</taxon>
        <taxon>eudicotyledons</taxon>
        <taxon>Gunneridae</taxon>
        <taxon>Pentapetalae</taxon>
        <taxon>rosids</taxon>
        <taxon>malvids</taxon>
        <taxon>Brassicales</taxon>
        <taxon>Brassicaceae</taxon>
        <taxon>Camelineae</taxon>
        <taxon>Arabidopsis</taxon>
    </lineage>
</organism>
<proteinExistence type="evidence at protein level"/>
<gene>
    <name evidence="6" type="primary">POP1</name>
    <name evidence="9" type="ordered locus">At2g47300</name>
</gene>